<evidence type="ECO:0000255" key="1">
    <source>
        <dbReference type="HAMAP-Rule" id="MF_01603"/>
    </source>
</evidence>
<feature type="chain" id="PRO_0000080117" description="Bifunctional protein HldE">
    <location>
        <begin position="1"/>
        <end position="474"/>
    </location>
</feature>
<feature type="region of interest" description="Ribokinase">
    <location>
        <begin position="1"/>
        <end position="318"/>
    </location>
</feature>
<feature type="region of interest" description="Cytidylyltransferase">
    <location>
        <begin position="344"/>
        <end position="474"/>
    </location>
</feature>
<feature type="active site" evidence="1">
    <location>
        <position position="264"/>
    </location>
</feature>
<feature type="binding site" evidence="1">
    <location>
        <begin position="195"/>
        <end position="198"/>
    </location>
    <ligand>
        <name>ATP</name>
        <dbReference type="ChEBI" id="CHEBI:30616"/>
    </ligand>
</feature>
<reference key="1">
    <citation type="journal article" date="2003" name="Nat. Biotechnol.">
        <title>The genome sequence of the entomopathogenic bacterium Photorhabdus luminescens.</title>
        <authorList>
            <person name="Duchaud E."/>
            <person name="Rusniok C."/>
            <person name="Frangeul L."/>
            <person name="Buchrieser C."/>
            <person name="Givaudan A."/>
            <person name="Taourit S."/>
            <person name="Bocs S."/>
            <person name="Boursaux-Eude C."/>
            <person name="Chandler M."/>
            <person name="Charles J.-F."/>
            <person name="Dassa E."/>
            <person name="Derose R."/>
            <person name="Derzelle S."/>
            <person name="Freyssinet G."/>
            <person name="Gaudriault S."/>
            <person name="Medigue C."/>
            <person name="Lanois A."/>
            <person name="Powell K."/>
            <person name="Siguier P."/>
            <person name="Vincent R."/>
            <person name="Wingate V."/>
            <person name="Zouine M."/>
            <person name="Glaser P."/>
            <person name="Boemare N."/>
            <person name="Danchin A."/>
            <person name="Kunst F."/>
        </authorList>
    </citation>
    <scope>NUCLEOTIDE SEQUENCE [LARGE SCALE GENOMIC DNA]</scope>
    <source>
        <strain>DSM 15139 / CIP 105565 / TT01</strain>
    </source>
</reference>
<name>HLDE_PHOLL</name>
<proteinExistence type="inferred from homology"/>
<dbReference type="EC" id="2.7.1.167" evidence="1"/>
<dbReference type="EC" id="2.7.7.70" evidence="1"/>
<dbReference type="EMBL" id="BX571872">
    <property type="protein sequence ID" value="CAE16340.1"/>
    <property type="molecule type" value="Genomic_DNA"/>
</dbReference>
<dbReference type="RefSeq" id="WP_011148101.1">
    <property type="nucleotide sequence ID" value="NC_005126.1"/>
</dbReference>
<dbReference type="SMR" id="Q7N0C3"/>
<dbReference type="STRING" id="243265.plu3968"/>
<dbReference type="GeneID" id="48850194"/>
<dbReference type="KEGG" id="plu:plu3968"/>
<dbReference type="eggNOG" id="COG0615">
    <property type="taxonomic scope" value="Bacteria"/>
</dbReference>
<dbReference type="eggNOG" id="COG2870">
    <property type="taxonomic scope" value="Bacteria"/>
</dbReference>
<dbReference type="HOGENOM" id="CLU_021150_2_1_6"/>
<dbReference type="OrthoDB" id="9802794at2"/>
<dbReference type="UniPathway" id="UPA00356">
    <property type="reaction ID" value="UER00437"/>
</dbReference>
<dbReference type="UniPathway" id="UPA00356">
    <property type="reaction ID" value="UER00439"/>
</dbReference>
<dbReference type="UniPathway" id="UPA00958"/>
<dbReference type="Proteomes" id="UP000002514">
    <property type="component" value="Chromosome"/>
</dbReference>
<dbReference type="GO" id="GO:0005829">
    <property type="term" value="C:cytosol"/>
    <property type="evidence" value="ECO:0007669"/>
    <property type="project" value="TreeGrafter"/>
</dbReference>
<dbReference type="GO" id="GO:0005524">
    <property type="term" value="F:ATP binding"/>
    <property type="evidence" value="ECO:0007669"/>
    <property type="project" value="UniProtKB-UniRule"/>
</dbReference>
<dbReference type="GO" id="GO:0033785">
    <property type="term" value="F:heptose 7-phosphate kinase activity"/>
    <property type="evidence" value="ECO:0007669"/>
    <property type="project" value="UniProtKB-UniRule"/>
</dbReference>
<dbReference type="GO" id="GO:0033786">
    <property type="term" value="F:heptose-1-phosphate adenylyltransferase activity"/>
    <property type="evidence" value="ECO:0007669"/>
    <property type="project" value="UniProtKB-UniRule"/>
</dbReference>
<dbReference type="GO" id="GO:0016773">
    <property type="term" value="F:phosphotransferase activity, alcohol group as acceptor"/>
    <property type="evidence" value="ECO:0007669"/>
    <property type="project" value="InterPro"/>
</dbReference>
<dbReference type="GO" id="GO:0097171">
    <property type="term" value="P:ADP-L-glycero-beta-D-manno-heptose biosynthetic process"/>
    <property type="evidence" value="ECO:0007669"/>
    <property type="project" value="UniProtKB-UniPathway"/>
</dbReference>
<dbReference type="GO" id="GO:0009244">
    <property type="term" value="P:lipopolysaccharide core region biosynthetic process"/>
    <property type="evidence" value="ECO:0007669"/>
    <property type="project" value="UniProtKB-UniPathway"/>
</dbReference>
<dbReference type="CDD" id="cd01172">
    <property type="entry name" value="RfaE_like"/>
    <property type="match status" value="1"/>
</dbReference>
<dbReference type="FunFam" id="3.40.1190.20:FF:000002">
    <property type="entry name" value="Bifunctional protein HldE"/>
    <property type="match status" value="1"/>
</dbReference>
<dbReference type="FunFam" id="3.40.50.620:FF:000028">
    <property type="entry name" value="Bifunctional protein HldE"/>
    <property type="match status" value="1"/>
</dbReference>
<dbReference type="Gene3D" id="3.40.1190.20">
    <property type="match status" value="1"/>
</dbReference>
<dbReference type="Gene3D" id="3.40.50.620">
    <property type="entry name" value="HUPs"/>
    <property type="match status" value="1"/>
</dbReference>
<dbReference type="HAMAP" id="MF_01603">
    <property type="entry name" value="HldE"/>
    <property type="match status" value="1"/>
</dbReference>
<dbReference type="InterPro" id="IPR023030">
    <property type="entry name" value="Bifunc_HldE"/>
</dbReference>
<dbReference type="InterPro" id="IPR002173">
    <property type="entry name" value="Carboh/pur_kinase_PfkB_CS"/>
</dbReference>
<dbReference type="InterPro" id="IPR004821">
    <property type="entry name" value="Cyt_trans-like"/>
</dbReference>
<dbReference type="InterPro" id="IPR011611">
    <property type="entry name" value="PfkB_dom"/>
</dbReference>
<dbReference type="InterPro" id="IPR011913">
    <property type="entry name" value="RfaE_dom_I"/>
</dbReference>
<dbReference type="InterPro" id="IPR011914">
    <property type="entry name" value="RfaE_dom_II"/>
</dbReference>
<dbReference type="InterPro" id="IPR029056">
    <property type="entry name" value="Ribokinase-like"/>
</dbReference>
<dbReference type="InterPro" id="IPR014729">
    <property type="entry name" value="Rossmann-like_a/b/a_fold"/>
</dbReference>
<dbReference type="NCBIfam" id="TIGR00125">
    <property type="entry name" value="cyt_tran_rel"/>
    <property type="match status" value="1"/>
</dbReference>
<dbReference type="NCBIfam" id="NF008454">
    <property type="entry name" value="PRK11316.1"/>
    <property type="match status" value="1"/>
</dbReference>
<dbReference type="NCBIfam" id="TIGR02198">
    <property type="entry name" value="rfaE_dom_I"/>
    <property type="match status" value="1"/>
</dbReference>
<dbReference type="NCBIfam" id="TIGR02199">
    <property type="entry name" value="rfaE_dom_II"/>
    <property type="match status" value="1"/>
</dbReference>
<dbReference type="PANTHER" id="PTHR46969">
    <property type="entry name" value="BIFUNCTIONAL PROTEIN HLDE"/>
    <property type="match status" value="1"/>
</dbReference>
<dbReference type="PANTHER" id="PTHR46969:SF1">
    <property type="entry name" value="BIFUNCTIONAL PROTEIN HLDE"/>
    <property type="match status" value="1"/>
</dbReference>
<dbReference type="Pfam" id="PF01467">
    <property type="entry name" value="CTP_transf_like"/>
    <property type="match status" value="1"/>
</dbReference>
<dbReference type="Pfam" id="PF00294">
    <property type="entry name" value="PfkB"/>
    <property type="match status" value="1"/>
</dbReference>
<dbReference type="SUPFAM" id="SSF52374">
    <property type="entry name" value="Nucleotidylyl transferase"/>
    <property type="match status" value="1"/>
</dbReference>
<dbReference type="SUPFAM" id="SSF53613">
    <property type="entry name" value="Ribokinase-like"/>
    <property type="match status" value="1"/>
</dbReference>
<dbReference type="PROSITE" id="PS00583">
    <property type="entry name" value="PFKB_KINASES_1"/>
    <property type="match status" value="1"/>
</dbReference>
<accession>Q7N0C3</accession>
<protein>
    <recommendedName>
        <fullName evidence="1">Bifunctional protein HldE</fullName>
    </recommendedName>
    <domain>
        <recommendedName>
            <fullName evidence="1">D-beta-D-heptose 7-phosphate kinase</fullName>
            <ecNumber evidence="1">2.7.1.167</ecNumber>
        </recommendedName>
        <alternativeName>
            <fullName evidence="1">D-beta-D-heptose 7-phosphotransferase</fullName>
        </alternativeName>
        <alternativeName>
            <fullName evidence="1">D-glycero-beta-D-manno-heptose-7-phosphate kinase</fullName>
        </alternativeName>
    </domain>
    <domain>
        <recommendedName>
            <fullName evidence="1">D-beta-D-heptose 1-phosphate adenylyltransferase</fullName>
            <ecNumber evidence="1">2.7.7.70</ecNumber>
        </recommendedName>
        <alternativeName>
            <fullName evidence="1">D-glycero-beta-D-manno-heptose 1-phosphate adenylyltransferase</fullName>
        </alternativeName>
    </domain>
</protein>
<sequence>MKMTLPDFHCAEVLVVGDVMLDRYWYGPTSRISPEAPVPVVKVNTIEERPGGAANVAMNIAALGANSHLIGLTGIDDAAHALSEKLRSVKVRCDFVSVPTHPTVTKLRVLSRNQQLIRLDFEEGFDNVDAQPMFERIEQALPHIGALVLSDYAKGALSQVQEMIKLANAAKVPVLIDPKGNDFERYRGATLLTPNLSEFEAVVGHCKDDNELVEKGTRLVKGLDLQALLITRSEQGMSLLSVDQPPLHLPTQAQEVFDVTGAGDTVIGVLATAIAAGKPLNEACFLANAAAGVVVGKLGTSTVSPIELENAIRGRAETGFGVMTEFQLKQAVVDARQRGERVVMTNGCFDILHAGHVSYLENARRLGDRLIVAVNSDASTKRLKGESRPVNPLEQRMIVLSALGAVDWVVPFEEDTPQRLIADVLPDVLVKGGDYKPEEIAGSEEVWAAGGDVKVLNFEDGISTTNIIKAIKNQ</sequence>
<organism>
    <name type="scientific">Photorhabdus laumondii subsp. laumondii (strain DSM 15139 / CIP 105565 / TT01)</name>
    <name type="common">Photorhabdus luminescens subsp. laumondii</name>
    <dbReference type="NCBI Taxonomy" id="243265"/>
    <lineage>
        <taxon>Bacteria</taxon>
        <taxon>Pseudomonadati</taxon>
        <taxon>Pseudomonadota</taxon>
        <taxon>Gammaproteobacteria</taxon>
        <taxon>Enterobacterales</taxon>
        <taxon>Morganellaceae</taxon>
        <taxon>Photorhabdus</taxon>
    </lineage>
</organism>
<gene>
    <name evidence="1" type="primary">hldE</name>
    <name type="synonym">rfaE</name>
    <name type="ordered locus">plu3968</name>
</gene>
<keyword id="KW-0067">ATP-binding</keyword>
<keyword id="KW-0119">Carbohydrate metabolism</keyword>
<keyword id="KW-0418">Kinase</keyword>
<keyword id="KW-0448">Lipopolysaccharide biosynthesis</keyword>
<keyword id="KW-0511">Multifunctional enzyme</keyword>
<keyword id="KW-0547">Nucleotide-binding</keyword>
<keyword id="KW-0548">Nucleotidyltransferase</keyword>
<keyword id="KW-1185">Reference proteome</keyword>
<keyword id="KW-0808">Transferase</keyword>
<comment type="function">
    <text evidence="1">Catalyzes the phosphorylation of D-glycero-D-manno-heptose 7-phosphate at the C-1 position to selectively form D-glycero-beta-D-manno-heptose-1,7-bisphosphate.</text>
</comment>
<comment type="function">
    <text evidence="1">Catalyzes the ADP transfer from ATP to D-glycero-beta-D-manno-heptose 1-phosphate, yielding ADP-D-glycero-beta-D-manno-heptose.</text>
</comment>
<comment type="catalytic activity">
    <reaction evidence="1">
        <text>D-glycero-beta-D-manno-heptose 7-phosphate + ATP = D-glycero-beta-D-manno-heptose 1,7-bisphosphate + ADP + H(+)</text>
        <dbReference type="Rhea" id="RHEA:27473"/>
        <dbReference type="ChEBI" id="CHEBI:15378"/>
        <dbReference type="ChEBI" id="CHEBI:30616"/>
        <dbReference type="ChEBI" id="CHEBI:60204"/>
        <dbReference type="ChEBI" id="CHEBI:60208"/>
        <dbReference type="ChEBI" id="CHEBI:456216"/>
        <dbReference type="EC" id="2.7.1.167"/>
    </reaction>
</comment>
<comment type="catalytic activity">
    <reaction evidence="1">
        <text>D-glycero-beta-D-manno-heptose 1-phosphate + ATP + H(+) = ADP-D-glycero-beta-D-manno-heptose + diphosphate</text>
        <dbReference type="Rhea" id="RHEA:27465"/>
        <dbReference type="ChEBI" id="CHEBI:15378"/>
        <dbReference type="ChEBI" id="CHEBI:30616"/>
        <dbReference type="ChEBI" id="CHEBI:33019"/>
        <dbReference type="ChEBI" id="CHEBI:59967"/>
        <dbReference type="ChEBI" id="CHEBI:61593"/>
        <dbReference type="EC" id="2.7.7.70"/>
    </reaction>
</comment>
<comment type="pathway">
    <text evidence="1">Nucleotide-sugar biosynthesis; ADP-L-glycero-beta-D-manno-heptose biosynthesis; ADP-L-glycero-beta-D-manno-heptose from D-glycero-beta-D-manno-heptose 7-phosphate: step 1/4.</text>
</comment>
<comment type="pathway">
    <text evidence="1">Nucleotide-sugar biosynthesis; ADP-L-glycero-beta-D-manno-heptose biosynthesis; ADP-L-glycero-beta-D-manno-heptose from D-glycero-beta-D-manno-heptose 7-phosphate: step 3/4.</text>
</comment>
<comment type="pathway">
    <text>Bacterial outer membrane biogenesis; LPS core biosynthesis.</text>
</comment>
<comment type="subunit">
    <text evidence="1">Homodimer.</text>
</comment>
<comment type="similarity">
    <text evidence="1">In the N-terminal section; belongs to the carbohydrate kinase PfkB family.</text>
</comment>
<comment type="similarity">
    <text evidence="1">In the C-terminal section; belongs to the cytidylyltransferase family.</text>
</comment>